<name>LOLD1_RHOPA</name>
<organism>
    <name type="scientific">Rhodopseudomonas palustris (strain ATCC BAA-98 / CGA009)</name>
    <dbReference type="NCBI Taxonomy" id="258594"/>
    <lineage>
        <taxon>Bacteria</taxon>
        <taxon>Pseudomonadati</taxon>
        <taxon>Pseudomonadota</taxon>
        <taxon>Alphaproteobacteria</taxon>
        <taxon>Hyphomicrobiales</taxon>
        <taxon>Nitrobacteraceae</taxon>
        <taxon>Rhodopseudomonas</taxon>
    </lineage>
</organism>
<keyword id="KW-0067">ATP-binding</keyword>
<keyword id="KW-0997">Cell inner membrane</keyword>
<keyword id="KW-1003">Cell membrane</keyword>
<keyword id="KW-0472">Membrane</keyword>
<keyword id="KW-0547">Nucleotide-binding</keyword>
<keyword id="KW-1278">Translocase</keyword>
<keyword id="KW-0813">Transport</keyword>
<comment type="function">
    <text evidence="1">Part of the ABC transporter complex LolCDE involved in the translocation of mature outer membrane-directed lipoproteins, from the inner membrane to the periplasmic chaperone, LolA. Responsible for the formation of the LolA-lipoprotein complex in an ATP-dependent manner.</text>
</comment>
<comment type="subunit">
    <text evidence="1">The complex is composed of two ATP-binding proteins (LolD) and two transmembrane proteins (LolC and LolE).</text>
</comment>
<comment type="subcellular location">
    <subcellularLocation>
        <location evidence="1">Cell inner membrane</location>
        <topology evidence="1">Peripheral membrane protein</topology>
    </subcellularLocation>
</comment>
<comment type="similarity">
    <text evidence="1">Belongs to the ABC transporter superfamily. Lipoprotein translocase (TC 3.A.1.125) family.</text>
</comment>
<sequence length="226" mass="24789">MADVLKLDGIRKSYNVGTPVETEVLHGIDLTMQRGDFLALMGPSGSGKSTLLNIIGLLDRPTGGRLLINGEDTGQLSDSALTHLRGHAIGFVFQYHYLISAFTARENVMMPMLVDRGRPDAAMEKRADELLDRVGLSRWRNNSATNMSGGQQQRVAVARALAMDPDLVLADEPTGNLDTKSANDVFELMRQINRERGTTFLLVTHNDDLAERCDRIVRVVDGKIAG</sequence>
<dbReference type="EC" id="7.6.2.-" evidence="1"/>
<dbReference type="EMBL" id="BX572598">
    <property type="protein sequence ID" value="CAE27091.1"/>
    <property type="molecule type" value="Genomic_DNA"/>
</dbReference>
<dbReference type="RefSeq" id="WP_011157209.1">
    <property type="nucleotide sequence ID" value="NZ_CP116810.1"/>
</dbReference>
<dbReference type="SMR" id="Q6N999"/>
<dbReference type="STRING" id="258594.RPA1650"/>
<dbReference type="GeneID" id="66892683"/>
<dbReference type="eggNOG" id="COG1136">
    <property type="taxonomic scope" value="Bacteria"/>
</dbReference>
<dbReference type="HOGENOM" id="CLU_000604_1_22_5"/>
<dbReference type="PhylomeDB" id="Q6N999"/>
<dbReference type="GO" id="GO:0005886">
    <property type="term" value="C:plasma membrane"/>
    <property type="evidence" value="ECO:0007669"/>
    <property type="project" value="UniProtKB-SubCell"/>
</dbReference>
<dbReference type="GO" id="GO:0005524">
    <property type="term" value="F:ATP binding"/>
    <property type="evidence" value="ECO:0007669"/>
    <property type="project" value="UniProtKB-KW"/>
</dbReference>
<dbReference type="GO" id="GO:0016887">
    <property type="term" value="F:ATP hydrolysis activity"/>
    <property type="evidence" value="ECO:0007669"/>
    <property type="project" value="InterPro"/>
</dbReference>
<dbReference type="GO" id="GO:0022857">
    <property type="term" value="F:transmembrane transporter activity"/>
    <property type="evidence" value="ECO:0007669"/>
    <property type="project" value="TreeGrafter"/>
</dbReference>
<dbReference type="GO" id="GO:0044874">
    <property type="term" value="P:lipoprotein localization to outer membrane"/>
    <property type="evidence" value="ECO:0007669"/>
    <property type="project" value="TreeGrafter"/>
</dbReference>
<dbReference type="GO" id="GO:0089705">
    <property type="term" value="P:protein localization to outer membrane"/>
    <property type="evidence" value="ECO:0007669"/>
    <property type="project" value="TreeGrafter"/>
</dbReference>
<dbReference type="CDD" id="cd03255">
    <property type="entry name" value="ABC_MJ0796_LolCDE_FtsE"/>
    <property type="match status" value="1"/>
</dbReference>
<dbReference type="FunFam" id="3.40.50.300:FF:000032">
    <property type="entry name" value="Export ABC transporter ATP-binding protein"/>
    <property type="match status" value="1"/>
</dbReference>
<dbReference type="Gene3D" id="3.40.50.300">
    <property type="entry name" value="P-loop containing nucleotide triphosphate hydrolases"/>
    <property type="match status" value="1"/>
</dbReference>
<dbReference type="InterPro" id="IPR003593">
    <property type="entry name" value="AAA+_ATPase"/>
</dbReference>
<dbReference type="InterPro" id="IPR003439">
    <property type="entry name" value="ABC_transporter-like_ATP-bd"/>
</dbReference>
<dbReference type="InterPro" id="IPR017871">
    <property type="entry name" value="ABC_transporter-like_CS"/>
</dbReference>
<dbReference type="InterPro" id="IPR015854">
    <property type="entry name" value="ABC_transpr_LolD-like"/>
</dbReference>
<dbReference type="InterPro" id="IPR017911">
    <property type="entry name" value="MacB-like_ATP-bd"/>
</dbReference>
<dbReference type="InterPro" id="IPR027417">
    <property type="entry name" value="P-loop_NTPase"/>
</dbReference>
<dbReference type="PANTHER" id="PTHR24220">
    <property type="entry name" value="IMPORT ATP-BINDING PROTEIN"/>
    <property type="match status" value="1"/>
</dbReference>
<dbReference type="PANTHER" id="PTHR24220:SF689">
    <property type="entry name" value="LIPOPROTEIN-RELEASING SYSTEM ATP-BINDING PROTEIN LOLD"/>
    <property type="match status" value="1"/>
</dbReference>
<dbReference type="Pfam" id="PF00005">
    <property type="entry name" value="ABC_tran"/>
    <property type="match status" value="1"/>
</dbReference>
<dbReference type="SMART" id="SM00382">
    <property type="entry name" value="AAA"/>
    <property type="match status" value="1"/>
</dbReference>
<dbReference type="SUPFAM" id="SSF52540">
    <property type="entry name" value="P-loop containing nucleoside triphosphate hydrolases"/>
    <property type="match status" value="1"/>
</dbReference>
<dbReference type="PROSITE" id="PS00211">
    <property type="entry name" value="ABC_TRANSPORTER_1"/>
    <property type="match status" value="1"/>
</dbReference>
<dbReference type="PROSITE" id="PS50893">
    <property type="entry name" value="ABC_TRANSPORTER_2"/>
    <property type="match status" value="1"/>
</dbReference>
<dbReference type="PROSITE" id="PS51244">
    <property type="entry name" value="LOLD"/>
    <property type="match status" value="1"/>
</dbReference>
<gene>
    <name evidence="1" type="primary">lolD1</name>
    <name type="ordered locus">RPA1650</name>
</gene>
<evidence type="ECO:0000255" key="1">
    <source>
        <dbReference type="HAMAP-Rule" id="MF_01708"/>
    </source>
</evidence>
<proteinExistence type="inferred from homology"/>
<reference key="1">
    <citation type="journal article" date="2004" name="Nat. Biotechnol.">
        <title>Complete genome sequence of the metabolically versatile photosynthetic bacterium Rhodopseudomonas palustris.</title>
        <authorList>
            <person name="Larimer F.W."/>
            <person name="Chain P."/>
            <person name="Hauser L."/>
            <person name="Lamerdin J.E."/>
            <person name="Malfatti S."/>
            <person name="Do L."/>
            <person name="Land M.L."/>
            <person name="Pelletier D.A."/>
            <person name="Beatty J.T."/>
            <person name="Lang A.S."/>
            <person name="Tabita F.R."/>
            <person name="Gibson J.L."/>
            <person name="Hanson T.E."/>
            <person name="Bobst C."/>
            <person name="Torres y Torres J.L."/>
            <person name="Peres C."/>
            <person name="Harrison F.H."/>
            <person name="Gibson J."/>
            <person name="Harwood C.S."/>
        </authorList>
    </citation>
    <scope>NUCLEOTIDE SEQUENCE [LARGE SCALE GENOMIC DNA]</scope>
    <source>
        <strain>ATCC BAA-98 / CGA009</strain>
    </source>
</reference>
<accession>Q6N999</accession>
<feature type="chain" id="PRO_0000272136" description="Lipoprotein-releasing system ATP-binding protein LolD 1">
    <location>
        <begin position="1"/>
        <end position="226"/>
    </location>
</feature>
<feature type="domain" description="ABC transporter" evidence="1">
    <location>
        <begin position="5"/>
        <end position="225"/>
    </location>
</feature>
<feature type="binding site" evidence="1">
    <location>
        <begin position="42"/>
        <end position="49"/>
    </location>
    <ligand>
        <name>ATP</name>
        <dbReference type="ChEBI" id="CHEBI:30616"/>
    </ligand>
</feature>
<protein>
    <recommendedName>
        <fullName evidence="1">Lipoprotein-releasing system ATP-binding protein LolD 1</fullName>
        <ecNumber evidence="1">7.6.2.-</ecNumber>
    </recommendedName>
</protein>